<dbReference type="EMBL" id="BA000036">
    <property type="protein sequence ID" value="BAB97878.1"/>
    <property type="molecule type" value="Genomic_DNA"/>
</dbReference>
<dbReference type="EMBL" id="BX927149">
    <property type="protein sequence ID" value="CAF19199.1"/>
    <property type="molecule type" value="Genomic_DNA"/>
</dbReference>
<dbReference type="RefSeq" id="NP_599730.1">
    <property type="nucleotide sequence ID" value="NC_003450.3"/>
</dbReference>
<dbReference type="RefSeq" id="WP_011013688.1">
    <property type="nucleotide sequence ID" value="NC_006958.1"/>
</dbReference>
<dbReference type="SMR" id="Q8NT29"/>
<dbReference type="STRING" id="196627.cg0572"/>
<dbReference type="GeneID" id="1021489"/>
<dbReference type="KEGG" id="cgb:cg0572"/>
<dbReference type="KEGG" id="cgl:Cgl0485"/>
<dbReference type="PATRIC" id="fig|196627.13.peg.483"/>
<dbReference type="eggNOG" id="COG0244">
    <property type="taxonomic scope" value="Bacteria"/>
</dbReference>
<dbReference type="HOGENOM" id="CLU_092227_1_0_11"/>
<dbReference type="OrthoDB" id="3186107at2"/>
<dbReference type="BioCyc" id="CORYNE:G18NG-10047-MONOMER"/>
<dbReference type="Proteomes" id="UP000000582">
    <property type="component" value="Chromosome"/>
</dbReference>
<dbReference type="Proteomes" id="UP000001009">
    <property type="component" value="Chromosome"/>
</dbReference>
<dbReference type="GO" id="GO:1990904">
    <property type="term" value="C:ribonucleoprotein complex"/>
    <property type="evidence" value="ECO:0007669"/>
    <property type="project" value="UniProtKB-KW"/>
</dbReference>
<dbReference type="GO" id="GO:0005840">
    <property type="term" value="C:ribosome"/>
    <property type="evidence" value="ECO:0007669"/>
    <property type="project" value="UniProtKB-KW"/>
</dbReference>
<dbReference type="GO" id="GO:0070180">
    <property type="term" value="F:large ribosomal subunit rRNA binding"/>
    <property type="evidence" value="ECO:0007669"/>
    <property type="project" value="UniProtKB-UniRule"/>
</dbReference>
<dbReference type="GO" id="GO:0006412">
    <property type="term" value="P:translation"/>
    <property type="evidence" value="ECO:0007669"/>
    <property type="project" value="UniProtKB-UniRule"/>
</dbReference>
<dbReference type="CDD" id="cd05797">
    <property type="entry name" value="Ribosomal_L10"/>
    <property type="match status" value="1"/>
</dbReference>
<dbReference type="Gene3D" id="3.30.70.1730">
    <property type="match status" value="1"/>
</dbReference>
<dbReference type="HAMAP" id="MF_00362">
    <property type="entry name" value="Ribosomal_uL10"/>
    <property type="match status" value="1"/>
</dbReference>
<dbReference type="InterPro" id="IPR001790">
    <property type="entry name" value="Ribosomal_uL10"/>
</dbReference>
<dbReference type="InterPro" id="IPR043141">
    <property type="entry name" value="Ribosomal_uL10-like_sf"/>
</dbReference>
<dbReference type="InterPro" id="IPR022973">
    <property type="entry name" value="Ribosomal_uL10_bac"/>
</dbReference>
<dbReference type="InterPro" id="IPR047865">
    <property type="entry name" value="Ribosomal_uL10_bac_type"/>
</dbReference>
<dbReference type="NCBIfam" id="NF000955">
    <property type="entry name" value="PRK00099.1-1"/>
    <property type="match status" value="1"/>
</dbReference>
<dbReference type="PANTHER" id="PTHR11560">
    <property type="entry name" value="39S RIBOSOMAL PROTEIN L10, MITOCHONDRIAL"/>
    <property type="match status" value="1"/>
</dbReference>
<dbReference type="Pfam" id="PF00466">
    <property type="entry name" value="Ribosomal_L10"/>
    <property type="match status" value="1"/>
</dbReference>
<dbReference type="SUPFAM" id="SSF160369">
    <property type="entry name" value="Ribosomal protein L10-like"/>
    <property type="match status" value="1"/>
</dbReference>
<feature type="chain" id="PRO_0000154622" description="Large ribosomal subunit protein uL10">
    <location>
        <begin position="1"/>
        <end position="171"/>
    </location>
</feature>
<name>RL10_CORGL</name>
<protein>
    <recommendedName>
        <fullName evidence="1">Large ribosomal subunit protein uL10</fullName>
    </recommendedName>
    <alternativeName>
        <fullName evidence="2">50S ribosomal protein L10</fullName>
    </alternativeName>
</protein>
<accession>Q8NT29</accession>
<gene>
    <name evidence="1" type="primary">rplJ</name>
    <name type="ordered locus">Cgl0485</name>
    <name type="ordered locus">cg0572</name>
</gene>
<organism>
    <name type="scientific">Corynebacterium glutamicum (strain ATCC 13032 / DSM 20300 / JCM 1318 / BCRC 11384 / CCUG 27702 / LMG 3730 / NBRC 12168 / NCIMB 10025 / NRRL B-2784 / 534)</name>
    <dbReference type="NCBI Taxonomy" id="196627"/>
    <lineage>
        <taxon>Bacteria</taxon>
        <taxon>Bacillati</taxon>
        <taxon>Actinomycetota</taxon>
        <taxon>Actinomycetes</taxon>
        <taxon>Mycobacteriales</taxon>
        <taxon>Corynebacteriaceae</taxon>
        <taxon>Corynebacterium</taxon>
    </lineage>
</organism>
<comment type="function">
    <text evidence="1">Forms part of the ribosomal stalk, playing a central role in the interaction of the ribosome with GTP-bound translation factors.</text>
</comment>
<comment type="subunit">
    <text evidence="1">Part of the ribosomal stalk of the 50S ribosomal subunit. The N-terminus interacts with L11 and the large rRNA to form the base of the stalk. The C-terminus forms an elongated spine to which L12 dimers bind in a sequential fashion forming a multimeric L10(L12)X complex.</text>
</comment>
<comment type="similarity">
    <text evidence="1">Belongs to the universal ribosomal protein uL10 family.</text>
</comment>
<sequence>MANPRNEAALAELKARFAETDTVVLTEYRGLTVAQTTELRKALGFDVQYSVAKNTLVKIAANEAGVEGLDDLLTGPTAVAFIKGEAVDTAKVLKKFGEENKAFVVKGGYMDGNALTAEQVNAIAELDNRETTLAKLAGAMKGSLAKAAGLFNAPASQVARLAVALQDKKDA</sequence>
<reference key="1">
    <citation type="journal article" date="2003" name="Appl. Microbiol. Biotechnol.">
        <title>The Corynebacterium glutamicum genome: features and impacts on biotechnological processes.</title>
        <authorList>
            <person name="Ikeda M."/>
            <person name="Nakagawa S."/>
        </authorList>
    </citation>
    <scope>NUCLEOTIDE SEQUENCE [LARGE SCALE GENOMIC DNA]</scope>
    <source>
        <strain>ATCC 13032 / DSM 20300 / JCM 1318 / BCRC 11384 / CCUG 27702 / LMG 3730 / NBRC 12168 / NCIMB 10025 / NRRL B-2784 / 534</strain>
    </source>
</reference>
<reference key="2">
    <citation type="journal article" date="2003" name="J. Biotechnol.">
        <title>The complete Corynebacterium glutamicum ATCC 13032 genome sequence and its impact on the production of L-aspartate-derived amino acids and vitamins.</title>
        <authorList>
            <person name="Kalinowski J."/>
            <person name="Bathe B."/>
            <person name="Bartels D."/>
            <person name="Bischoff N."/>
            <person name="Bott M."/>
            <person name="Burkovski A."/>
            <person name="Dusch N."/>
            <person name="Eggeling L."/>
            <person name="Eikmanns B.J."/>
            <person name="Gaigalat L."/>
            <person name="Goesmann A."/>
            <person name="Hartmann M."/>
            <person name="Huthmacher K."/>
            <person name="Kraemer R."/>
            <person name="Linke B."/>
            <person name="McHardy A.C."/>
            <person name="Meyer F."/>
            <person name="Moeckel B."/>
            <person name="Pfefferle W."/>
            <person name="Puehler A."/>
            <person name="Rey D.A."/>
            <person name="Rueckert C."/>
            <person name="Rupp O."/>
            <person name="Sahm H."/>
            <person name="Wendisch V.F."/>
            <person name="Wiegraebe I."/>
            <person name="Tauch A."/>
        </authorList>
    </citation>
    <scope>NUCLEOTIDE SEQUENCE [LARGE SCALE GENOMIC DNA]</scope>
    <source>
        <strain>ATCC 13032 / DSM 20300 / JCM 1318 / BCRC 11384 / CCUG 27702 / LMG 3730 / NBRC 12168 / NCIMB 10025 / NRRL B-2784 / 534</strain>
    </source>
</reference>
<keyword id="KW-1185">Reference proteome</keyword>
<keyword id="KW-0687">Ribonucleoprotein</keyword>
<keyword id="KW-0689">Ribosomal protein</keyword>
<keyword id="KW-0694">RNA-binding</keyword>
<keyword id="KW-0699">rRNA-binding</keyword>
<proteinExistence type="inferred from homology"/>
<evidence type="ECO:0000255" key="1">
    <source>
        <dbReference type="HAMAP-Rule" id="MF_00362"/>
    </source>
</evidence>
<evidence type="ECO:0000305" key="2"/>